<comment type="function">
    <text evidence="1">Plays a role in cell envelope biogenesis, maintenance of cell envelope integrity and membrane homeostasis.</text>
</comment>
<comment type="subcellular location">
    <subcellularLocation>
        <location evidence="1">Cell inner membrane</location>
        <topology evidence="1">Multi-pass membrane protein</topology>
    </subcellularLocation>
</comment>
<comment type="similarity">
    <text evidence="1">Belongs to the YciB family.</text>
</comment>
<protein>
    <recommendedName>
        <fullName evidence="1">Inner membrane-spanning protein YciB</fullName>
    </recommendedName>
</protein>
<evidence type="ECO:0000255" key="1">
    <source>
        <dbReference type="HAMAP-Rule" id="MF_00189"/>
    </source>
</evidence>
<reference key="1">
    <citation type="journal article" date="2004" name="Proc. Natl. Acad. Sci. U.S.A.">
        <title>Genomic plasticity of the causative agent of melioidosis, Burkholderia pseudomallei.</title>
        <authorList>
            <person name="Holden M.T.G."/>
            <person name="Titball R.W."/>
            <person name="Peacock S.J."/>
            <person name="Cerdeno-Tarraga A.-M."/>
            <person name="Atkins T."/>
            <person name="Crossman L.C."/>
            <person name="Pitt T."/>
            <person name="Churcher C."/>
            <person name="Mungall K.L."/>
            <person name="Bentley S.D."/>
            <person name="Sebaihia M."/>
            <person name="Thomson N.R."/>
            <person name="Bason N."/>
            <person name="Beacham I.R."/>
            <person name="Brooks K."/>
            <person name="Brown K.A."/>
            <person name="Brown N.F."/>
            <person name="Challis G.L."/>
            <person name="Cherevach I."/>
            <person name="Chillingworth T."/>
            <person name="Cronin A."/>
            <person name="Crossett B."/>
            <person name="Davis P."/>
            <person name="DeShazer D."/>
            <person name="Feltwell T."/>
            <person name="Fraser A."/>
            <person name="Hance Z."/>
            <person name="Hauser H."/>
            <person name="Holroyd S."/>
            <person name="Jagels K."/>
            <person name="Keith K.E."/>
            <person name="Maddison M."/>
            <person name="Moule S."/>
            <person name="Price C."/>
            <person name="Quail M.A."/>
            <person name="Rabbinowitsch E."/>
            <person name="Rutherford K."/>
            <person name="Sanders M."/>
            <person name="Simmonds M."/>
            <person name="Songsivilai S."/>
            <person name="Stevens K."/>
            <person name="Tumapa S."/>
            <person name="Vesaratchavest M."/>
            <person name="Whitehead S."/>
            <person name="Yeats C."/>
            <person name="Barrell B.G."/>
            <person name="Oyston P.C.F."/>
            <person name="Parkhill J."/>
        </authorList>
    </citation>
    <scope>NUCLEOTIDE SEQUENCE [LARGE SCALE GENOMIC DNA]</scope>
    <source>
        <strain>K96243</strain>
    </source>
</reference>
<organism>
    <name type="scientific">Burkholderia pseudomallei (strain K96243)</name>
    <dbReference type="NCBI Taxonomy" id="272560"/>
    <lineage>
        <taxon>Bacteria</taxon>
        <taxon>Pseudomonadati</taxon>
        <taxon>Pseudomonadota</taxon>
        <taxon>Betaproteobacteria</taxon>
        <taxon>Burkholderiales</taxon>
        <taxon>Burkholderiaceae</taxon>
        <taxon>Burkholderia</taxon>
        <taxon>pseudomallei group</taxon>
    </lineage>
</organism>
<keyword id="KW-0997">Cell inner membrane</keyword>
<keyword id="KW-1003">Cell membrane</keyword>
<keyword id="KW-0472">Membrane</keyword>
<keyword id="KW-1185">Reference proteome</keyword>
<keyword id="KW-0812">Transmembrane</keyword>
<keyword id="KW-1133">Transmembrane helix</keyword>
<sequence length="176" mass="20017">MKFLFDLFPIILFFAAFKLWGIFTATAVAIAATLAQVAWVAFRHRKVDTMLWVSLGVIVVFGGATLVLHDEKFIQWKPTVLYWLFAVGLVAARYAFGKNLIEKMMGKQLTLPEPVWDKLNLAWAAFFAALGVTNLYVVRNFTESQWVNFKLFGTTGAIVVFVILQSLWLAKYLKEE</sequence>
<dbReference type="EMBL" id="BX571965">
    <property type="protein sequence ID" value="CAH35422.1"/>
    <property type="molecule type" value="Genomic_DNA"/>
</dbReference>
<dbReference type="RefSeq" id="WP_004192037.1">
    <property type="nucleotide sequence ID" value="NZ_CP009538.1"/>
</dbReference>
<dbReference type="RefSeq" id="YP_108042.1">
    <property type="nucleotide sequence ID" value="NC_006350.1"/>
</dbReference>
<dbReference type="STRING" id="272560.BPSL1420"/>
<dbReference type="KEGG" id="bps:BPSL1420"/>
<dbReference type="PATRIC" id="fig|272560.51.peg.3439"/>
<dbReference type="eggNOG" id="COG2917">
    <property type="taxonomic scope" value="Bacteria"/>
</dbReference>
<dbReference type="Proteomes" id="UP000000605">
    <property type="component" value="Chromosome 1"/>
</dbReference>
<dbReference type="GO" id="GO:0005886">
    <property type="term" value="C:plasma membrane"/>
    <property type="evidence" value="ECO:0007669"/>
    <property type="project" value="UniProtKB-SubCell"/>
</dbReference>
<dbReference type="HAMAP" id="MF_00189">
    <property type="entry name" value="YciB"/>
    <property type="match status" value="1"/>
</dbReference>
<dbReference type="InterPro" id="IPR006008">
    <property type="entry name" value="YciB"/>
</dbReference>
<dbReference type="NCBIfam" id="TIGR00997">
    <property type="entry name" value="ispZ"/>
    <property type="match status" value="1"/>
</dbReference>
<dbReference type="NCBIfam" id="NF001325">
    <property type="entry name" value="PRK00259.1-3"/>
    <property type="match status" value="1"/>
</dbReference>
<dbReference type="PANTHER" id="PTHR36917:SF1">
    <property type="entry name" value="INNER MEMBRANE-SPANNING PROTEIN YCIB"/>
    <property type="match status" value="1"/>
</dbReference>
<dbReference type="PANTHER" id="PTHR36917">
    <property type="entry name" value="INTRACELLULAR SEPTATION PROTEIN A-RELATED"/>
    <property type="match status" value="1"/>
</dbReference>
<dbReference type="Pfam" id="PF04279">
    <property type="entry name" value="IspA"/>
    <property type="match status" value="1"/>
</dbReference>
<accession>Q63V24</accession>
<proteinExistence type="inferred from homology"/>
<gene>
    <name evidence="1" type="primary">yciB</name>
    <name type="ordered locus">BPSL1420</name>
</gene>
<name>YCIB_BURPS</name>
<feature type="chain" id="PRO_1000020998" description="Inner membrane-spanning protein YciB">
    <location>
        <begin position="1"/>
        <end position="176"/>
    </location>
</feature>
<feature type="transmembrane region" description="Helical" evidence="1">
    <location>
        <begin position="3"/>
        <end position="23"/>
    </location>
</feature>
<feature type="transmembrane region" description="Helical" evidence="1">
    <location>
        <begin position="49"/>
        <end position="69"/>
    </location>
</feature>
<feature type="transmembrane region" description="Helical" evidence="1">
    <location>
        <begin position="72"/>
        <end position="92"/>
    </location>
</feature>
<feature type="transmembrane region" description="Helical" evidence="1">
    <location>
        <begin position="118"/>
        <end position="138"/>
    </location>
</feature>
<feature type="transmembrane region" description="Helical" evidence="1">
    <location>
        <begin position="149"/>
        <end position="169"/>
    </location>
</feature>